<dbReference type="EC" id="7.6.2.-" evidence="1"/>
<dbReference type="EMBL" id="BA000032">
    <property type="protein sequence ID" value="BAC61567.1"/>
    <property type="molecule type" value="Genomic_DNA"/>
</dbReference>
<dbReference type="RefSeq" id="NP_799734.1">
    <property type="nucleotide sequence ID" value="NC_004605.1"/>
</dbReference>
<dbReference type="RefSeq" id="WP_005481460.1">
    <property type="nucleotide sequence ID" value="NC_004605.1"/>
</dbReference>
<dbReference type="SMR" id="Q87JM4"/>
<dbReference type="GeneID" id="1190912"/>
<dbReference type="KEGG" id="vpa:VPA0224"/>
<dbReference type="PATRIC" id="fig|223926.6.peg.3179"/>
<dbReference type="eggNOG" id="COG0577">
    <property type="taxonomic scope" value="Bacteria"/>
</dbReference>
<dbReference type="eggNOG" id="COG1136">
    <property type="taxonomic scope" value="Bacteria"/>
</dbReference>
<dbReference type="HOGENOM" id="CLU_000604_78_1_6"/>
<dbReference type="Proteomes" id="UP000002493">
    <property type="component" value="Chromosome 2"/>
</dbReference>
<dbReference type="GO" id="GO:0005886">
    <property type="term" value="C:plasma membrane"/>
    <property type="evidence" value="ECO:0007669"/>
    <property type="project" value="UniProtKB-SubCell"/>
</dbReference>
<dbReference type="GO" id="GO:0005524">
    <property type="term" value="F:ATP binding"/>
    <property type="evidence" value="ECO:0007669"/>
    <property type="project" value="UniProtKB-KW"/>
</dbReference>
<dbReference type="GO" id="GO:0016887">
    <property type="term" value="F:ATP hydrolysis activity"/>
    <property type="evidence" value="ECO:0007669"/>
    <property type="project" value="InterPro"/>
</dbReference>
<dbReference type="GO" id="GO:0022857">
    <property type="term" value="F:transmembrane transporter activity"/>
    <property type="evidence" value="ECO:0007669"/>
    <property type="project" value="TreeGrafter"/>
</dbReference>
<dbReference type="GO" id="GO:0046677">
    <property type="term" value="P:response to antibiotic"/>
    <property type="evidence" value="ECO:0007669"/>
    <property type="project" value="UniProtKB-KW"/>
</dbReference>
<dbReference type="CDD" id="cd03255">
    <property type="entry name" value="ABC_MJ0796_LolCDE_FtsE"/>
    <property type="match status" value="1"/>
</dbReference>
<dbReference type="FunFam" id="3.40.50.300:FF:000032">
    <property type="entry name" value="Export ABC transporter ATP-binding protein"/>
    <property type="match status" value="1"/>
</dbReference>
<dbReference type="Gene3D" id="3.40.50.300">
    <property type="entry name" value="P-loop containing nucleotide triphosphate hydrolases"/>
    <property type="match status" value="1"/>
</dbReference>
<dbReference type="InterPro" id="IPR003593">
    <property type="entry name" value="AAA+_ATPase"/>
</dbReference>
<dbReference type="InterPro" id="IPR003838">
    <property type="entry name" value="ABC3_permease_C"/>
</dbReference>
<dbReference type="InterPro" id="IPR003439">
    <property type="entry name" value="ABC_transporter-like_ATP-bd"/>
</dbReference>
<dbReference type="InterPro" id="IPR017871">
    <property type="entry name" value="ABC_transporter-like_CS"/>
</dbReference>
<dbReference type="InterPro" id="IPR017911">
    <property type="entry name" value="MacB-like_ATP-bd"/>
</dbReference>
<dbReference type="InterPro" id="IPR025857">
    <property type="entry name" value="MacB_PCD"/>
</dbReference>
<dbReference type="InterPro" id="IPR050250">
    <property type="entry name" value="Macrolide_Exporter_MacB"/>
</dbReference>
<dbReference type="InterPro" id="IPR027417">
    <property type="entry name" value="P-loop_NTPase"/>
</dbReference>
<dbReference type="PANTHER" id="PTHR30572:SF14">
    <property type="entry name" value="MACROLIDE EXPORT ATP-BINDING_PERMEASE PROTEIN MACB"/>
    <property type="match status" value="1"/>
</dbReference>
<dbReference type="PANTHER" id="PTHR30572">
    <property type="entry name" value="MEMBRANE COMPONENT OF TRANSPORTER-RELATED"/>
    <property type="match status" value="1"/>
</dbReference>
<dbReference type="Pfam" id="PF00005">
    <property type="entry name" value="ABC_tran"/>
    <property type="match status" value="1"/>
</dbReference>
<dbReference type="Pfam" id="PF02687">
    <property type="entry name" value="FtsX"/>
    <property type="match status" value="1"/>
</dbReference>
<dbReference type="Pfam" id="PF12704">
    <property type="entry name" value="MacB_PCD"/>
    <property type="match status" value="1"/>
</dbReference>
<dbReference type="SMART" id="SM00382">
    <property type="entry name" value="AAA"/>
    <property type="match status" value="1"/>
</dbReference>
<dbReference type="SUPFAM" id="SSF52540">
    <property type="entry name" value="P-loop containing nucleoside triphosphate hydrolases"/>
    <property type="match status" value="1"/>
</dbReference>
<dbReference type="PROSITE" id="PS00211">
    <property type="entry name" value="ABC_TRANSPORTER_1"/>
    <property type="match status" value="1"/>
</dbReference>
<dbReference type="PROSITE" id="PS50893">
    <property type="entry name" value="ABC_TRANSPORTER_2"/>
    <property type="match status" value="1"/>
</dbReference>
<dbReference type="PROSITE" id="PS51267">
    <property type="entry name" value="MACB"/>
    <property type="match status" value="1"/>
</dbReference>
<accession>Q87JM4</accession>
<organism>
    <name type="scientific">Vibrio parahaemolyticus serotype O3:K6 (strain RIMD 2210633)</name>
    <dbReference type="NCBI Taxonomy" id="223926"/>
    <lineage>
        <taxon>Bacteria</taxon>
        <taxon>Pseudomonadati</taxon>
        <taxon>Pseudomonadota</taxon>
        <taxon>Gammaproteobacteria</taxon>
        <taxon>Vibrionales</taxon>
        <taxon>Vibrionaceae</taxon>
        <taxon>Vibrio</taxon>
    </lineage>
</organism>
<comment type="function">
    <text evidence="1">Part of the tripartite efflux system MacAB-TolC. MacB is a non-canonical ABC transporter that contains transmembrane domains (TMD), which form a pore in the inner membrane, and an ATP-binding domain (NBD), which is responsible for energy generation. Confers resistance against macrolides.</text>
</comment>
<comment type="subunit">
    <text evidence="1">Homodimer. Part of the tripartite efflux system MacAB-TolC, which is composed of an inner membrane transporter, MacB, a periplasmic membrane fusion protein, MacA, and an outer membrane component, TolC. The complex forms a large protein conduit and can translocate molecules across both the inner and outer membranes. Interacts with MacA.</text>
</comment>
<comment type="subcellular location">
    <subcellularLocation>
        <location evidence="1">Cell inner membrane</location>
        <topology evidence="1">Multi-pass membrane protein</topology>
    </subcellularLocation>
</comment>
<comment type="similarity">
    <text evidence="1">Belongs to the ABC transporter superfamily. Macrolide exporter (TC 3.A.1.122) family.</text>
</comment>
<sequence>MSDVLLKVEDLTRRFVSGDESLTVLNHINLEIKRGEMVAIVGASGSGKSTLMNVLGCLDKPSSGRYFINGQDVSTLESDQLAELRREYFGFIFQRYHLLGDLTAVANVEVPAVYAGVPHRQRTERAQSLLARLGLEDRLTHKPSQLSGGQQQRVSVARALMNGGEVILADEPTGALDSHSGQEMMALLKELHQLGHTIILVTHDMNVANFADRIIEIKDGEIIADTLNAQVVINEQAAKTPSASFHRPAQAVSKWWKWDSFIDALKMALLAMSSHRMRTFLTMLGIIIGIASVVSVVALGNGSQQQILSNISSMGTNTIDVRPGKGFGDRRSGRVKTLTADDAKSLESLPFVDSVTPSLSNSLTVRYANQDATASVEGVGEDYFRVRGYEIAKGQFWDEESVNSLAQEAVIDDNTRKEMFADRNPIGEVIFLGSLPVRIVGVTQKKEDAFGNSDALKIWVPYTTMSGRMMGQRYLNGITVRIDENAPSAAVEQSIINLLKMRHGTEDFFTINTDTIRQSIEKTTATMTLLISAIAVISLIVGGIGVMNIMLVSVTERTKEIGVRMAVGARQADILRQFLIEAVLVCLCGGIAGIGLAFLIGFAFSTSGSSFQMIYSMNSIIWAFICSTLIGIAFGFLPARNAAKLDPIEALARD</sequence>
<proteinExistence type="inferred from homology"/>
<protein>
    <recommendedName>
        <fullName evidence="1">Macrolide export ATP-binding/permease protein MacB</fullName>
        <ecNumber evidence="1">7.6.2.-</ecNumber>
    </recommendedName>
</protein>
<feature type="chain" id="PRO_0000269984" description="Macrolide export ATP-binding/permease protein MacB">
    <location>
        <begin position="1"/>
        <end position="654"/>
    </location>
</feature>
<feature type="transmembrane region" description="Helical" evidence="1">
    <location>
        <begin position="280"/>
        <end position="300"/>
    </location>
</feature>
<feature type="transmembrane region" description="Helical" evidence="1">
    <location>
        <begin position="529"/>
        <end position="549"/>
    </location>
</feature>
<feature type="transmembrane region" description="Helical" evidence="1">
    <location>
        <begin position="584"/>
        <end position="604"/>
    </location>
</feature>
<feature type="transmembrane region" description="Helical" evidence="1">
    <location>
        <begin position="619"/>
        <end position="639"/>
    </location>
</feature>
<feature type="domain" description="ABC transporter" evidence="1">
    <location>
        <begin position="6"/>
        <end position="244"/>
    </location>
</feature>
<feature type="binding site" evidence="1">
    <location>
        <begin position="42"/>
        <end position="49"/>
    </location>
    <ligand>
        <name>ATP</name>
        <dbReference type="ChEBI" id="CHEBI:30616"/>
    </ligand>
</feature>
<gene>
    <name evidence="1" type="primary">macB</name>
    <name type="ordered locus">VPA0224</name>
</gene>
<reference key="1">
    <citation type="journal article" date="2003" name="Lancet">
        <title>Genome sequence of Vibrio parahaemolyticus: a pathogenic mechanism distinct from that of V. cholerae.</title>
        <authorList>
            <person name="Makino K."/>
            <person name="Oshima K."/>
            <person name="Kurokawa K."/>
            <person name="Yokoyama K."/>
            <person name="Uda T."/>
            <person name="Tagomori K."/>
            <person name="Iijima Y."/>
            <person name="Najima M."/>
            <person name="Nakano M."/>
            <person name="Yamashita A."/>
            <person name="Kubota Y."/>
            <person name="Kimura S."/>
            <person name="Yasunaga T."/>
            <person name="Honda T."/>
            <person name="Shinagawa H."/>
            <person name="Hattori M."/>
            <person name="Iida T."/>
        </authorList>
    </citation>
    <scope>NUCLEOTIDE SEQUENCE [LARGE SCALE GENOMIC DNA]</scope>
    <source>
        <strain>RIMD 2210633</strain>
    </source>
</reference>
<evidence type="ECO:0000255" key="1">
    <source>
        <dbReference type="HAMAP-Rule" id="MF_01720"/>
    </source>
</evidence>
<name>MACB_VIBPA</name>
<keyword id="KW-0046">Antibiotic resistance</keyword>
<keyword id="KW-0067">ATP-binding</keyword>
<keyword id="KW-0997">Cell inner membrane</keyword>
<keyword id="KW-1003">Cell membrane</keyword>
<keyword id="KW-0472">Membrane</keyword>
<keyword id="KW-0547">Nucleotide-binding</keyword>
<keyword id="KW-1278">Translocase</keyword>
<keyword id="KW-0812">Transmembrane</keyword>
<keyword id="KW-1133">Transmembrane helix</keyword>
<keyword id="KW-0813">Transport</keyword>